<gene>
    <name evidence="3" type="primary">THI12</name>
    <name evidence="6" type="ordered locus">YNL332W</name>
    <name type="ORF">N0295</name>
</gene>
<proteinExistence type="inferred from homology"/>
<accession>P42883</accession>
<accession>D6W0L5</accession>
<keyword id="KW-0408">Iron</keyword>
<keyword id="KW-0479">Metal-binding</keyword>
<keyword id="KW-0663">Pyridoxal phosphate</keyword>
<keyword id="KW-1185">Reference proteome</keyword>
<keyword id="KW-0784">Thiamine biosynthesis</keyword>
<keyword id="KW-0808">Transferase</keyword>
<sequence length="340" mass="38620">MSTDKITFLLNWQPTPYHIPIFLAQTKGYFKEQGLDMAILEPTNPSDVTELIGSGKVDMGLKAMIHTLAAKARGFPVTSVASLLDEPFTGVLYLKGSGITEDFQSLKGKKIGYVGEFGKIQIDELTKHYGMKPEDYTAVRCGMNVAKYIIEGKIDAGIGIECMQQVELEEYLAKQGRPASDAKMLRIDKLACLGCCCFCTVLYICNDEFLKKNPEKVRKFLKAIKKATDYVLADPVKAWKEYIDFKPRLNNDLSYKQYQRCYAYFSSSLYNVHRDWKKVTGYGKRLAILPPDYVSNYTNEYLSWPEPEEVSDPLEAQRLMAIHQEKCRQEGTFKRLALPA</sequence>
<comment type="function">
    <text evidence="2">Responsible for the formation of the pyrimidine heterocycle in the thiamine biosynthesis pathway. Catalyzes the formation of hydroxymethylpyrimidine phosphate (HMP-P) from histidine and pyridoxal phosphate (PLP). The protein uses PLP and the active site histidine to form HMP-P, generating an inactive enzyme. The enzyme can only undergo a single turnover, which suggests it is a suicide enzyme.</text>
</comment>
<comment type="catalytic activity">
    <reaction evidence="2">
        <text>N(6)-(pyridoxal phosphate)-L-lysyl-[4-amino-5-hydroxymethyl-2-methylpyrimidine phosphate synthase] + L-histidyl-[4-amino-5-hydroxymethyl-2-methylpyrimidine phosphate synthase] + 2 Fe(3+) + 4 H2O = L-lysyl-[4-amino-5-hydroxymethyl-2-methylpyrimidine phosphate synthase] + (2S)-2-amino-5-hydroxy-4-oxopentanoyl-[4-amino-5-hydroxymethyl-2-methylpyrimidine phosphate synthase] + 4-amino-2-methyl-5-(phosphooxymethyl)pyrimidine + 3-oxopropanoate + 2 Fe(2+) + 2 H(+)</text>
        <dbReference type="Rhea" id="RHEA:65756"/>
        <dbReference type="Rhea" id="RHEA-COMP:16892"/>
        <dbReference type="Rhea" id="RHEA-COMP:16893"/>
        <dbReference type="Rhea" id="RHEA-COMP:16894"/>
        <dbReference type="Rhea" id="RHEA-COMP:16895"/>
        <dbReference type="ChEBI" id="CHEBI:15377"/>
        <dbReference type="ChEBI" id="CHEBI:15378"/>
        <dbReference type="ChEBI" id="CHEBI:29033"/>
        <dbReference type="ChEBI" id="CHEBI:29034"/>
        <dbReference type="ChEBI" id="CHEBI:29969"/>
        <dbReference type="ChEBI" id="CHEBI:29979"/>
        <dbReference type="ChEBI" id="CHEBI:33190"/>
        <dbReference type="ChEBI" id="CHEBI:58354"/>
        <dbReference type="ChEBI" id="CHEBI:143915"/>
        <dbReference type="ChEBI" id="CHEBI:157692"/>
    </reaction>
    <physiologicalReaction direction="left-to-right" evidence="2">
        <dbReference type="Rhea" id="RHEA:65757"/>
    </physiologicalReaction>
</comment>
<comment type="cofactor">
    <cofactor evidence="2">
        <name>Fe cation</name>
        <dbReference type="ChEBI" id="CHEBI:24875"/>
    </cofactor>
</comment>
<comment type="pathway">
    <text evidence="5">Cofactor biosynthesis; thiamine diphosphate biosynthesis.</text>
</comment>
<comment type="subunit">
    <text evidence="2">Homodimer.</text>
</comment>
<comment type="similarity">
    <text evidence="4">Belongs to the NMT1/THI5 family.</text>
</comment>
<reference key="1">
    <citation type="journal article" date="1995" name="Yeast">
        <title>An 8.2 kb DNA segment from chromosome XIV carries the RPD3 and PAS8 genes as well as the Saccharomyces cerevisiae homologue of the thiamine-repressed nmt1 gene and a chromosome III-duplicated gene for a putative aryl-alcohol dehydrogenase.</title>
        <authorList>
            <person name="van Dyck L."/>
            <person name="Pascual-Ahuir A."/>
            <person name="Purnelle B."/>
            <person name="Goffeau A."/>
        </authorList>
    </citation>
    <scope>NUCLEOTIDE SEQUENCE [GENOMIC DNA]</scope>
    <source>
        <strain>ATCC 96604 / S288c / FY1679</strain>
    </source>
</reference>
<reference key="2">
    <citation type="journal article" date="1997" name="Nature">
        <title>The nucleotide sequence of Saccharomyces cerevisiae chromosome XIV and its evolutionary implications.</title>
        <authorList>
            <person name="Philippsen P."/>
            <person name="Kleine K."/>
            <person name="Poehlmann R."/>
            <person name="Duesterhoeft A."/>
            <person name="Hamberg K."/>
            <person name="Hegemann J.H."/>
            <person name="Obermaier B."/>
            <person name="Urrestarazu L.A."/>
            <person name="Aert R."/>
            <person name="Albermann K."/>
            <person name="Altmann R."/>
            <person name="Andre B."/>
            <person name="Baladron V."/>
            <person name="Ballesta J.P.G."/>
            <person name="Becam A.-M."/>
            <person name="Beinhauer J.D."/>
            <person name="Boskovic J."/>
            <person name="Buitrago M.J."/>
            <person name="Bussereau F."/>
            <person name="Coster F."/>
            <person name="Crouzet M."/>
            <person name="D'Angelo M."/>
            <person name="Dal Pero F."/>
            <person name="De Antoni A."/>
            <person name="del Rey F."/>
            <person name="Doignon F."/>
            <person name="Domdey H."/>
            <person name="Dubois E."/>
            <person name="Fiedler T.A."/>
            <person name="Fleig U."/>
            <person name="Floeth M."/>
            <person name="Fritz C."/>
            <person name="Gaillardin C."/>
            <person name="Garcia-Cantalejo J.M."/>
            <person name="Glansdorff N."/>
            <person name="Goffeau A."/>
            <person name="Gueldener U."/>
            <person name="Herbert C.J."/>
            <person name="Heumann K."/>
            <person name="Heuss-Neitzel D."/>
            <person name="Hilbert H."/>
            <person name="Hinni K."/>
            <person name="Iraqui Houssaini I."/>
            <person name="Jacquet M."/>
            <person name="Jimenez A."/>
            <person name="Jonniaux J.-L."/>
            <person name="Karpfinger-Hartl L."/>
            <person name="Lanfranchi G."/>
            <person name="Lepingle A."/>
            <person name="Levesque H."/>
            <person name="Lyck R."/>
            <person name="Maftahi M."/>
            <person name="Mallet L."/>
            <person name="Maurer C.T.C."/>
            <person name="Messenguy F."/>
            <person name="Mewes H.-W."/>
            <person name="Moestl D."/>
            <person name="Nasr F."/>
            <person name="Nicaud J.-M."/>
            <person name="Niedenthal R.K."/>
            <person name="Pandolfo D."/>
            <person name="Pierard A."/>
            <person name="Piravandi E."/>
            <person name="Planta R.J."/>
            <person name="Pohl T.M."/>
            <person name="Purnelle B."/>
            <person name="Rebischung C."/>
            <person name="Remacha M.A."/>
            <person name="Revuelta J.L."/>
            <person name="Rinke M."/>
            <person name="Saiz J.E."/>
            <person name="Sartorello F."/>
            <person name="Scherens B."/>
            <person name="Sen-Gupta M."/>
            <person name="Soler-Mira A."/>
            <person name="Urbanus J.H.M."/>
            <person name="Valle G."/>
            <person name="Van Dyck L."/>
            <person name="Verhasselt P."/>
            <person name="Vierendeels F."/>
            <person name="Vissers S."/>
            <person name="Voet M."/>
            <person name="Volckaert G."/>
            <person name="Wach A."/>
            <person name="Wambutt R."/>
            <person name="Wedler H."/>
            <person name="Zollner A."/>
            <person name="Hani J."/>
        </authorList>
    </citation>
    <scope>NUCLEOTIDE SEQUENCE [LARGE SCALE GENOMIC DNA]</scope>
    <source>
        <strain>ATCC 204508 / S288c</strain>
    </source>
</reference>
<reference key="3">
    <citation type="journal article" date="2014" name="G3 (Bethesda)">
        <title>The reference genome sequence of Saccharomyces cerevisiae: Then and now.</title>
        <authorList>
            <person name="Engel S.R."/>
            <person name="Dietrich F.S."/>
            <person name="Fisk D.G."/>
            <person name="Binkley G."/>
            <person name="Balakrishnan R."/>
            <person name="Costanzo M.C."/>
            <person name="Dwight S.S."/>
            <person name="Hitz B.C."/>
            <person name="Karra K."/>
            <person name="Nash R.S."/>
            <person name="Weng S."/>
            <person name="Wong E.D."/>
            <person name="Lloyd P."/>
            <person name="Skrzypek M.S."/>
            <person name="Miyasato S.R."/>
            <person name="Simison M."/>
            <person name="Cherry J.M."/>
        </authorList>
    </citation>
    <scope>GENOME REANNOTATION</scope>
    <source>
        <strain>ATCC 204508 / S288c</strain>
    </source>
</reference>
<reference key="4">
    <citation type="journal article" date="2003" name="Microbiology">
        <title>The THI5 gene family of Saccharomyces cerevisiae: distribution of homologues among the hemiascomycetes and functional redundancy in the aerobic biosynthesis of thiamin from pyridoxine.</title>
        <authorList>
            <person name="Wightman R."/>
            <person name="Meacock P.A."/>
        </authorList>
    </citation>
    <scope>PATHWAY</scope>
</reference>
<name>THI12_YEAST</name>
<evidence type="ECO:0000250" key="1">
    <source>
        <dbReference type="UniProtKB" id="C4YMW2"/>
    </source>
</evidence>
<evidence type="ECO:0000250" key="2">
    <source>
        <dbReference type="UniProtKB" id="P43534"/>
    </source>
</evidence>
<evidence type="ECO:0000303" key="3">
    <source>
    </source>
</evidence>
<evidence type="ECO:0000305" key="4"/>
<evidence type="ECO:0000305" key="5">
    <source>
    </source>
</evidence>
<evidence type="ECO:0000312" key="6">
    <source>
        <dbReference type="SGD" id="S000005276"/>
    </source>
</evidence>
<feature type="chain" id="PRO_0000211620" description="4-amino-5-hydroxymethyl-2-methylpyrimidine phosphate synthase THI12">
    <location>
        <begin position="1"/>
        <end position="340"/>
    </location>
</feature>
<feature type="short sequence motif" description="CCCFC; essential for catalytic activity, may be the site of iron coordination" evidence="2">
    <location>
        <begin position="195"/>
        <end position="199"/>
    </location>
</feature>
<feature type="active site" evidence="2">
    <location>
        <position position="66"/>
    </location>
</feature>
<feature type="binding site" evidence="2">
    <location>
        <begin position="115"/>
        <end position="118"/>
    </location>
    <ligand>
        <name>pyridoxal 5'-phosphate</name>
        <dbReference type="ChEBI" id="CHEBI:597326"/>
    </ligand>
</feature>
<feature type="modified residue" description="N6-(pyridoxal phosphate)lysine" evidence="2">
    <location>
        <position position="62"/>
    </location>
</feature>
<protein>
    <recommendedName>
        <fullName evidence="2">4-amino-5-hydroxymethyl-2-methylpyrimidine phosphate synthase THI12</fullName>
        <shortName evidence="2">HMP-P synthase</shortName>
        <shortName evidence="2">Hydroxymethylpyrimidine phosphate synthase</shortName>
        <ecNumber evidence="2">2.-.-.-</ecNumber>
    </recommendedName>
    <alternativeName>
        <fullName evidence="3">Thiamine biosynthesis protein 12</fullName>
    </alternativeName>
    <alternativeName>
        <fullName evidence="1">Thiamine pyrimidine synthase</fullName>
    </alternativeName>
</protein>
<organism>
    <name type="scientific">Saccharomyces cerevisiae (strain ATCC 204508 / S288c)</name>
    <name type="common">Baker's yeast</name>
    <dbReference type="NCBI Taxonomy" id="559292"/>
    <lineage>
        <taxon>Eukaryota</taxon>
        <taxon>Fungi</taxon>
        <taxon>Dikarya</taxon>
        <taxon>Ascomycota</taxon>
        <taxon>Saccharomycotina</taxon>
        <taxon>Saccharomycetes</taxon>
        <taxon>Saccharomycetales</taxon>
        <taxon>Saccharomycetaceae</taxon>
        <taxon>Saccharomyces</taxon>
    </lineage>
</organism>
<dbReference type="EC" id="2.-.-.-" evidence="2"/>
<dbReference type="EMBL" id="X83226">
    <property type="protein sequence ID" value="CAA58226.1"/>
    <property type="molecule type" value="Genomic_DNA"/>
</dbReference>
<dbReference type="EMBL" id="Z71608">
    <property type="protein sequence ID" value="CAA96265.1"/>
    <property type="molecule type" value="Genomic_DNA"/>
</dbReference>
<dbReference type="EMBL" id="BK006947">
    <property type="protein sequence ID" value="DAA10231.1"/>
    <property type="molecule type" value="Genomic_DNA"/>
</dbReference>
<dbReference type="RefSeq" id="NP_014067.1">
    <property type="nucleotide sequence ID" value="NM_001183170.1"/>
</dbReference>
<dbReference type="SMR" id="P42883"/>
<dbReference type="BioGRID" id="35509">
    <property type="interactions" value="15"/>
</dbReference>
<dbReference type="FunCoup" id="P42883">
    <property type="interactions" value="189"/>
</dbReference>
<dbReference type="IntAct" id="P42883">
    <property type="interactions" value="1"/>
</dbReference>
<dbReference type="STRING" id="4932.YNL332W"/>
<dbReference type="PaxDb" id="4932-YNL332W"/>
<dbReference type="PeptideAtlas" id="P42883"/>
<dbReference type="EnsemblFungi" id="YNL332W_mRNA">
    <property type="protein sequence ID" value="YNL332W"/>
    <property type="gene ID" value="YNL332W"/>
</dbReference>
<dbReference type="GeneID" id="855384"/>
<dbReference type="KEGG" id="sce:YNL332W"/>
<dbReference type="AGR" id="SGD:S000005276"/>
<dbReference type="SGD" id="S000005276">
    <property type="gene designation" value="THI12"/>
</dbReference>
<dbReference type="VEuPathDB" id="FungiDB:YNL332W"/>
<dbReference type="eggNOG" id="ENOG502QQ87">
    <property type="taxonomic scope" value="Eukaryota"/>
</dbReference>
<dbReference type="GeneTree" id="ENSGT00940000176330"/>
<dbReference type="HOGENOM" id="CLU_028871_6_3_1"/>
<dbReference type="InParanoid" id="P42883"/>
<dbReference type="OrthoDB" id="434407at2759"/>
<dbReference type="BioCyc" id="YEAST:MONOMER3O-9140"/>
<dbReference type="UniPathway" id="UPA00060"/>
<dbReference type="PRO" id="PR:P42883"/>
<dbReference type="Proteomes" id="UP000002311">
    <property type="component" value="Chromosome XIV"/>
</dbReference>
<dbReference type="RNAct" id="P42883">
    <property type="molecule type" value="protein"/>
</dbReference>
<dbReference type="GO" id="GO:0106344">
    <property type="term" value="F:4-amino-5-hydroxymethyl-2-methylpyrimidine phosphate synthase activity from histidine and PLP"/>
    <property type="evidence" value="ECO:0000250"/>
    <property type="project" value="UniProtKB"/>
</dbReference>
<dbReference type="GO" id="GO:0046872">
    <property type="term" value="F:metal ion binding"/>
    <property type="evidence" value="ECO:0007669"/>
    <property type="project" value="UniProtKB-KW"/>
</dbReference>
<dbReference type="GO" id="GO:0009228">
    <property type="term" value="P:thiamine biosynthetic process"/>
    <property type="evidence" value="ECO:0000316"/>
    <property type="project" value="SGD"/>
</dbReference>
<dbReference type="GO" id="GO:0009229">
    <property type="term" value="P:thiamine diphosphate biosynthetic process"/>
    <property type="evidence" value="ECO:0007669"/>
    <property type="project" value="UniProtKB-UniPathway"/>
</dbReference>
<dbReference type="CDD" id="cd13650">
    <property type="entry name" value="PBP2_THI5"/>
    <property type="match status" value="1"/>
</dbReference>
<dbReference type="FunFam" id="3.40.190.10:FF:000187">
    <property type="entry name" value="4-amino-5-hydroxymethyl-2-methylpyrimidine phosphate synthase THI5"/>
    <property type="match status" value="1"/>
</dbReference>
<dbReference type="Gene3D" id="3.40.190.10">
    <property type="entry name" value="Periplasmic binding protein-like II"/>
    <property type="match status" value="2"/>
</dbReference>
<dbReference type="InterPro" id="IPR027939">
    <property type="entry name" value="NMT1/THI5"/>
</dbReference>
<dbReference type="InterPro" id="IPR015168">
    <property type="entry name" value="SsuA/THI5"/>
</dbReference>
<dbReference type="PANTHER" id="PTHR31528">
    <property type="entry name" value="4-AMINO-5-HYDROXYMETHYL-2-METHYLPYRIMIDINE PHOSPHATE SYNTHASE THI11-RELATED"/>
    <property type="match status" value="1"/>
</dbReference>
<dbReference type="PANTHER" id="PTHR31528:SF1">
    <property type="entry name" value="4-AMINO-5-HYDROXYMETHYL-2-METHYLPYRIMIDINE PHOSPHATE SYNTHASE THI11-RELATED"/>
    <property type="match status" value="1"/>
</dbReference>
<dbReference type="Pfam" id="PF09084">
    <property type="entry name" value="NMT1"/>
    <property type="match status" value="1"/>
</dbReference>
<dbReference type="SUPFAM" id="SSF53850">
    <property type="entry name" value="Periplasmic binding protein-like II"/>
    <property type="match status" value="1"/>
</dbReference>